<dbReference type="EMBL" id="CT573071">
    <property type="protein sequence ID" value="CAJ73611.1"/>
    <property type="molecule type" value="Genomic_DNA"/>
</dbReference>
<dbReference type="PDB" id="5C2V">
    <property type="method" value="X-ray"/>
    <property type="resolution" value="2.70 A"/>
    <property type="chains" value="B/E=35-386"/>
</dbReference>
<dbReference type="PDB" id="5C2W">
    <property type="method" value="X-ray"/>
    <property type="resolution" value="3.20 A"/>
    <property type="chains" value="B/E=35-386"/>
</dbReference>
<dbReference type="PDBsum" id="5C2V"/>
<dbReference type="PDBsum" id="5C2W"/>
<dbReference type="SMR" id="Q1Q0T4"/>
<dbReference type="DIP" id="DIP-61792N"/>
<dbReference type="IntAct" id="Q1Q0T4">
    <property type="interactions" value="1"/>
</dbReference>
<dbReference type="KEGG" id="ag:CAJ73611"/>
<dbReference type="BioCyc" id="MetaCyc:MONOMER-15346"/>
<dbReference type="EvolutionaryTrace" id="Q1Q0T4"/>
<dbReference type="GO" id="GO:0044222">
    <property type="term" value="C:anammoxosome"/>
    <property type="evidence" value="ECO:0000314"/>
    <property type="project" value="CACAO"/>
</dbReference>
<dbReference type="Gene3D" id="2.130.10.10">
    <property type="entry name" value="YVTN repeat-like/Quinoprotein amine dehydrogenase"/>
    <property type="match status" value="1"/>
</dbReference>
<dbReference type="InterPro" id="IPR051200">
    <property type="entry name" value="Host-pathogen_enzymatic-act"/>
</dbReference>
<dbReference type="InterPro" id="IPR011045">
    <property type="entry name" value="N2O_reductase_N"/>
</dbReference>
<dbReference type="InterPro" id="IPR015943">
    <property type="entry name" value="WD40/YVTN_repeat-like_dom_sf"/>
</dbReference>
<dbReference type="InterPro" id="IPR048433">
    <property type="entry name" value="YNCE-like_beta-prop"/>
</dbReference>
<dbReference type="InterPro" id="IPR011964">
    <property type="entry name" value="YVTN_b-propeller_repeat"/>
</dbReference>
<dbReference type="NCBIfam" id="TIGR02276">
    <property type="entry name" value="beta_rpt_yvtn"/>
    <property type="match status" value="1"/>
</dbReference>
<dbReference type="PANTHER" id="PTHR47197:SF3">
    <property type="entry name" value="DIHYDRO-HEME D1 DEHYDROGENASE"/>
    <property type="match status" value="1"/>
</dbReference>
<dbReference type="PANTHER" id="PTHR47197">
    <property type="entry name" value="PROTEIN NIRF"/>
    <property type="match status" value="1"/>
</dbReference>
<dbReference type="Pfam" id="PF21783">
    <property type="entry name" value="YNCE"/>
    <property type="match status" value="1"/>
</dbReference>
<dbReference type="SUPFAM" id="SSF50974">
    <property type="entry name" value="Nitrous oxide reductase, N-terminal domain"/>
    <property type="match status" value="1"/>
</dbReference>
<reference key="1">
    <citation type="journal article" date="2006" name="Nature">
        <title>Deciphering the evolution and metabolism of an anammox bacterium from a community genome.</title>
        <authorList>
            <person name="Strous M."/>
            <person name="Pelletier E."/>
            <person name="Mangenot S."/>
            <person name="Rattei T."/>
            <person name="Lehner A."/>
            <person name="Taylor M.W."/>
            <person name="Horn M."/>
            <person name="Daims H."/>
            <person name="Bartol-Mavel D."/>
            <person name="Wincker P."/>
            <person name="Barbe V."/>
            <person name="Fonknechten N."/>
            <person name="Vallenet D."/>
            <person name="Segurens B."/>
            <person name="Schenowitz-Truong C."/>
            <person name="Medigue C."/>
            <person name="Collingro A."/>
            <person name="Snel B."/>
            <person name="Dutilh B.E."/>
            <person name="Op den Camp H.J."/>
            <person name="van der Drift C."/>
            <person name="Cirpus I."/>
            <person name="van de Pas-Schoonen K.T."/>
            <person name="Harhangi H.R."/>
            <person name="van Niftrik L."/>
            <person name="Schmid M."/>
            <person name="Keltjens J."/>
            <person name="van de Vossenberg J."/>
            <person name="Kartal B."/>
            <person name="Meier H."/>
            <person name="Frishman D."/>
            <person name="Huynen M.A."/>
            <person name="Mewes H."/>
            <person name="Weissenbach J."/>
            <person name="Jetten M.S.M."/>
            <person name="Wagner M."/>
            <person name="Le Paslier D."/>
        </authorList>
    </citation>
    <scope>NUCLEOTIDE SEQUENCE [LARGE SCALE GENOMIC DNA]</scope>
</reference>
<reference key="2">
    <citation type="journal article" date="2011" name="Nature">
        <title>Molecular mechanism of anaerobic ammonium oxidation.</title>
        <authorList>
            <person name="Kartal B."/>
            <person name="Maalcke W.J."/>
            <person name="de Almeida N.M."/>
            <person name="Cirpus I."/>
            <person name="Gloerich J."/>
            <person name="Geerts W."/>
            <person name="Op den Camp H.J."/>
            <person name="Harhangi H.R."/>
            <person name="Janssen-Megens E.M."/>
            <person name="Francoijs K.J."/>
            <person name="Stunnenberg H.G."/>
            <person name="Keltjens J.T."/>
            <person name="Jetten M.S."/>
            <person name="Strous M."/>
        </authorList>
    </citation>
    <scope>FUNCTION</scope>
    <scope>SUBCELLULAR LOCATION</scope>
    <scope>PATHWAY</scope>
    <scope>INDUCTION</scope>
</reference>
<reference evidence="7 8" key="3">
    <citation type="journal article" date="2015" name="Nature">
        <title>The inner workings of the hydrazine synthase multiprotein complex.</title>
        <authorList>
            <person name="Dietl A."/>
            <person name="Ferousi C."/>
            <person name="Maalcke W.J."/>
            <person name="Menzel A."/>
            <person name="de Vries S."/>
            <person name="Keltjens J.T."/>
            <person name="Jetten M.S."/>
            <person name="Kartal B."/>
            <person name="Barends T.R."/>
        </authorList>
    </citation>
    <scope>X-RAY CRYSTALLOGRAPHY (2.70 ANGSTROMS) OF 35-386 IN COMPLEX WITH OTHER SUBUNITS OF THE HYDRAZINE SYNTHASE COMPLEX</scope>
    <scope>FUNCTION</scope>
    <scope>REACTION MECHANISM</scope>
    <scope>SUBUNIT</scope>
</reference>
<organism>
    <name type="scientific">Kuenenia stuttgartiensis</name>
    <dbReference type="NCBI Taxonomy" id="174633"/>
    <lineage>
        <taxon>Bacteria</taxon>
        <taxon>Pseudomonadati</taxon>
        <taxon>Planctomycetota</taxon>
        <taxon>Candidatus Brocadiia</taxon>
        <taxon>Candidatus Brocadiales</taxon>
        <taxon>Candidatus Brocadiaceae</taxon>
        <taxon>Candidatus Kuenenia</taxon>
    </lineage>
</organism>
<gene>
    <name evidence="6" type="ORF">kuste2859</name>
</gene>
<protein>
    <recommendedName>
        <fullName evidence="4">Hydrazine synthase subunit beta</fullName>
        <shortName evidence="4">HZS-beta</shortName>
    </recommendedName>
</protein>
<name>HZSB_KUEST</name>
<keyword id="KW-0002">3D-structure</keyword>
<keyword id="KW-0732">Signal</keyword>
<feature type="signal peptide" evidence="1">
    <location>
        <begin position="1"/>
        <end position="34"/>
    </location>
</feature>
<feature type="chain" id="PRO_0000441261" description="Hydrazine synthase subunit beta">
    <location>
        <begin position="35"/>
        <end position="386"/>
    </location>
</feature>
<feature type="strand" evidence="9">
    <location>
        <begin position="49"/>
        <end position="54"/>
    </location>
</feature>
<feature type="strand" evidence="9">
    <location>
        <begin position="58"/>
        <end position="65"/>
    </location>
</feature>
<feature type="turn" evidence="9">
    <location>
        <begin position="66"/>
        <end position="69"/>
    </location>
</feature>
<feature type="strand" evidence="9">
    <location>
        <begin position="70"/>
        <end position="75"/>
    </location>
</feature>
<feature type="turn" evidence="9">
    <location>
        <begin position="76"/>
        <end position="79"/>
    </location>
</feature>
<feature type="strand" evidence="9">
    <location>
        <begin position="80"/>
        <end position="86"/>
    </location>
</feature>
<feature type="strand" evidence="9">
    <location>
        <begin position="91"/>
        <end position="96"/>
    </location>
</feature>
<feature type="strand" evidence="9">
    <location>
        <begin position="100"/>
        <end position="107"/>
    </location>
</feature>
<feature type="turn" evidence="9">
    <location>
        <begin position="108"/>
        <end position="111"/>
    </location>
</feature>
<feature type="strand" evidence="9">
    <location>
        <begin position="112"/>
        <end position="117"/>
    </location>
</feature>
<feature type="turn" evidence="9">
    <location>
        <begin position="118"/>
        <end position="121"/>
    </location>
</feature>
<feature type="strand" evidence="9">
    <location>
        <begin position="122"/>
        <end position="128"/>
    </location>
</feature>
<feature type="strand" evidence="9">
    <location>
        <begin position="133"/>
        <end position="138"/>
    </location>
</feature>
<feature type="strand" evidence="9">
    <location>
        <begin position="142"/>
        <end position="149"/>
    </location>
</feature>
<feature type="strand" evidence="9">
    <location>
        <begin position="156"/>
        <end position="161"/>
    </location>
</feature>
<feature type="turn" evidence="9">
    <location>
        <begin position="162"/>
        <end position="165"/>
    </location>
</feature>
<feature type="strand" evidence="9">
    <location>
        <begin position="166"/>
        <end position="171"/>
    </location>
</feature>
<feature type="strand" evidence="9">
    <location>
        <begin position="174"/>
        <end position="176"/>
    </location>
</feature>
<feature type="strand" evidence="9">
    <location>
        <begin position="178"/>
        <end position="183"/>
    </location>
</feature>
<feature type="strand" evidence="9">
    <location>
        <begin position="187"/>
        <end position="194"/>
    </location>
</feature>
<feature type="strand" evidence="9">
    <location>
        <begin position="200"/>
        <end position="208"/>
    </location>
</feature>
<feature type="turn" evidence="9">
    <location>
        <begin position="209"/>
        <end position="212"/>
    </location>
</feature>
<feature type="strand" evidence="9">
    <location>
        <begin position="213"/>
        <end position="220"/>
    </location>
</feature>
<feature type="strand" evidence="9">
    <location>
        <begin position="224"/>
        <end position="231"/>
    </location>
</feature>
<feature type="strand" evidence="9">
    <location>
        <begin position="235"/>
        <end position="245"/>
    </location>
</feature>
<feature type="strand" evidence="9">
    <location>
        <begin position="248"/>
        <end position="250"/>
    </location>
</feature>
<feature type="helix" evidence="9">
    <location>
        <begin position="255"/>
        <end position="257"/>
    </location>
</feature>
<feature type="strand" evidence="9">
    <location>
        <begin position="258"/>
        <end position="268"/>
    </location>
</feature>
<feature type="strand" evidence="9">
    <location>
        <begin position="275"/>
        <end position="279"/>
    </location>
</feature>
<feature type="strand" evidence="9">
    <location>
        <begin position="289"/>
        <end position="295"/>
    </location>
</feature>
<feature type="strand" evidence="9">
    <location>
        <begin position="301"/>
        <end position="306"/>
    </location>
</feature>
<feature type="turn" evidence="9">
    <location>
        <begin position="307"/>
        <end position="310"/>
    </location>
</feature>
<feature type="strand" evidence="9">
    <location>
        <begin position="311"/>
        <end position="316"/>
    </location>
</feature>
<feature type="helix" evidence="9">
    <location>
        <begin position="317"/>
        <end position="325"/>
    </location>
</feature>
<feature type="helix" evidence="9">
    <location>
        <begin position="329"/>
        <end position="335"/>
    </location>
</feature>
<feature type="strand" evidence="9">
    <location>
        <begin position="338"/>
        <end position="341"/>
    </location>
</feature>
<feature type="helix" evidence="9">
    <location>
        <begin position="342"/>
        <end position="345"/>
    </location>
</feature>
<feature type="strand" evidence="9">
    <location>
        <begin position="346"/>
        <end position="351"/>
    </location>
</feature>
<feature type="strand" evidence="9">
    <location>
        <begin position="356"/>
        <end position="361"/>
    </location>
</feature>
<feature type="strand" evidence="9">
    <location>
        <begin position="365"/>
        <end position="372"/>
    </location>
</feature>
<feature type="turn" evidence="9">
    <location>
        <begin position="373"/>
        <end position="376"/>
    </location>
</feature>
<feature type="strand" evidence="9">
    <location>
        <begin position="377"/>
        <end position="382"/>
    </location>
</feature>
<evidence type="ECO:0000255" key="1"/>
<evidence type="ECO:0000269" key="2">
    <source>
    </source>
</evidence>
<evidence type="ECO:0000269" key="3">
    <source>
    </source>
</evidence>
<evidence type="ECO:0000303" key="4">
    <source>
    </source>
</evidence>
<evidence type="ECO:0000305" key="5">
    <source>
    </source>
</evidence>
<evidence type="ECO:0000312" key="6">
    <source>
        <dbReference type="EMBL" id="CAJ73611.1"/>
    </source>
</evidence>
<evidence type="ECO:0007744" key="7">
    <source>
        <dbReference type="PDB" id="5C2V"/>
    </source>
</evidence>
<evidence type="ECO:0007744" key="8">
    <source>
        <dbReference type="PDB" id="5C2W"/>
    </source>
</evidence>
<evidence type="ECO:0007829" key="9">
    <source>
        <dbReference type="PDB" id="5C2V"/>
    </source>
</evidence>
<sequence>MVIRRKMNKMIRKGMIGAVMLGAAVAISGGVATAGYIQGTHVKTDLPGPFHITMSPDGSTLFISNQSGHSVTFVDARTQKVTGEVAVRVQPEASAVTPDGAFLYVCNAESDSVSVVDIQRKQEIKEIKVGDWPSGIKISPDGKTAYVACSGCMWNAIDVIDTGRMEKVRSIYTSDYGPRMVEISPDGKTLVAILDTVGSINRSVDFIDIASGRVVENRVIHESSNLRDVVYTPDGKYIAVTHQTPKNWLPVCEAENGQVFTNNVTIIETKAGGKVARLPLDDLNNYDGNPYGMAMDPKGKYLYIGVRGMHRVTILDMDKVLGLVRSSTQEELDYLRDDLGLVRDYLVARVPTGLGPSSVCLSPDGKFCYAANYFSNNVTVIRTAVD</sequence>
<comment type="function">
    <text evidence="2 3">Component of the hydrazine synthase complex that catalyzes the condensation of nitric oxide (NO) with ammonium to form hydrazine (PubMed:21964329). The beta subunit may play a role in modulating transport of the hydroxylamine intermediate through a tunnel between the gamma and alpha subunit's active site (PubMed:26479033). Is involved in anaerobic ammonium oxidation (anammox), a biological process in which nitrite is used as the electron acceptor in the conversion of ammonium to dinitrogen gas (N2) and water; this bacterial process has a major role in the Earth's nitrogen cycle and has been estimated to synthesize up to 50% of the dinitrogen gas emitted into our atmosphere from the oceans (PubMed:21964329, PubMed:26479033).</text>
</comment>
<comment type="pathway">
    <text evidence="2">Nitrogen metabolism.</text>
</comment>
<comment type="subunit">
    <text evidence="3">Part of the hydrazine synthase complex that forms an elongated dimer of heterotrimers composed of one alpha, one beta and one gamma subunit.</text>
</comment>
<comment type="subcellular location">
    <subcellularLocation>
        <location evidence="5">Anammoxosome</location>
    </subcellularLocation>
</comment>
<comment type="induction">
    <text evidence="2">Is among the most highly expressed proteins in the proteome.</text>
</comment>
<accession>Q1Q0T4</accession>
<proteinExistence type="evidence at protein level"/>